<accession>P24849</accession>
<protein>
    <recommendedName>
        <fullName>Minor capsid protein VP2</fullName>
    </recommendedName>
    <alternativeName>
        <fullName>Minor structural protein VP2</fullName>
    </alternativeName>
</protein>
<organism>
    <name type="scientific">Bovine polyomavirus</name>
    <name type="common">BPyV</name>
    <name type="synonym">Bos taurus polyomavirus 1</name>
    <dbReference type="NCBI Taxonomy" id="1891754"/>
    <lineage>
        <taxon>Viruses</taxon>
        <taxon>Monodnaviria</taxon>
        <taxon>Shotokuvirae</taxon>
        <taxon>Cossaviricota</taxon>
        <taxon>Papovaviricetes</taxon>
        <taxon>Sepolyvirales</taxon>
        <taxon>Polyomaviridae</taxon>
        <taxon>Epsilonpolyomavirus</taxon>
    </lineage>
</organism>
<reference key="1">
    <citation type="journal article" date="1990" name="J. Gen. Virol.">
        <title>The complete nucleotide sequence of bovine polyomavirus.</title>
        <authorList>
            <person name="Schuurman R."/>
            <person name="Sol C."/>
            <person name="van der Noordaa J."/>
        </authorList>
    </citation>
    <scope>NUCLEOTIDE SEQUENCE [GENOMIC DNA]</scope>
</reference>
<reference key="2">
    <citation type="journal article" date="2009" name="Virology">
        <title>The Polyomaviridae: Contributions of virus structure to our understanding of virus receptors and infectious entry.</title>
        <authorList>
            <person name="Neu U."/>
            <person name="Stehle T."/>
            <person name="Atwood W.J."/>
        </authorList>
    </citation>
    <scope>REVIEW</scope>
</reference>
<organismHost>
    <name type="scientific">Bos taurus</name>
    <name type="common">Bovine</name>
    <dbReference type="NCBI Taxonomy" id="9913"/>
</organismHost>
<name>VP2_POVBO</name>
<feature type="initiator methionine" description="Removed; by host" evidence="1">
    <location>
        <position position="1"/>
    </location>
</feature>
<feature type="chain" id="PRO_0000039207" description="Minor capsid protein VP2">
    <location>
        <begin position="2"/>
        <end position="353"/>
    </location>
</feature>
<feature type="transmembrane region" description="Helical" evidence="2">
    <location>
        <begin position="279"/>
        <end position="299"/>
    </location>
</feature>
<feature type="region of interest" description="D1" evidence="1">
    <location>
        <begin position="262"/>
        <end position="297"/>
    </location>
</feature>
<feature type="region of interest" description="Disordered" evidence="3">
    <location>
        <begin position="301"/>
        <end position="353"/>
    </location>
</feature>
<feature type="region of interest" description="DNA-binding" evidence="1">
    <location>
        <begin position="302"/>
        <end position="353"/>
    </location>
</feature>
<feature type="short sequence motif" description="Nuclear localization signal" evidence="1">
    <location>
        <begin position="318"/>
        <end position="327"/>
    </location>
</feature>
<feature type="compositionally biased region" description="Acidic residues" evidence="3">
    <location>
        <begin position="301"/>
        <end position="316"/>
    </location>
</feature>
<feature type="lipid moiety-binding region" description="N-myristoyl glycine; by host" evidence="1">
    <location>
        <position position="2"/>
    </location>
</feature>
<feature type="splice variant" id="VSP_018917" description="In isoform VP3." evidence="4">
    <location>
        <begin position="1"/>
        <end position="121"/>
    </location>
</feature>
<dbReference type="EMBL" id="D13942">
    <property type="protein sequence ID" value="BAA03037.1"/>
    <property type="molecule type" value="Genomic_DNA"/>
</dbReference>
<dbReference type="EMBL" id="D13942">
    <property type="protein sequence ID" value="BAA03038.1"/>
    <property type="molecule type" value="Genomic_DNA"/>
</dbReference>
<dbReference type="PIR" id="JU0360">
    <property type="entry name" value="VVVPB2"/>
</dbReference>
<dbReference type="RefSeq" id="NP_040785.1">
    <molecule id="P24849-1"/>
    <property type="nucleotide sequence ID" value="NC_001442.1"/>
</dbReference>
<dbReference type="RefSeq" id="NP_040786.1">
    <molecule id="P24849-2"/>
    <property type="nucleotide sequence ID" value="NC_001442.1"/>
</dbReference>
<dbReference type="GeneID" id="29031003"/>
<dbReference type="GeneID" id="29031004"/>
<dbReference type="KEGG" id="vg:29031003"/>
<dbReference type="KEGG" id="vg:29031004"/>
<dbReference type="OrthoDB" id="6378at10239"/>
<dbReference type="Proteomes" id="UP000008476">
    <property type="component" value="Genome"/>
</dbReference>
<dbReference type="GO" id="GO:0043657">
    <property type="term" value="C:host cell"/>
    <property type="evidence" value="ECO:0007669"/>
    <property type="project" value="GOC"/>
</dbReference>
<dbReference type="GO" id="GO:0044167">
    <property type="term" value="C:host cell endoplasmic reticulum membrane"/>
    <property type="evidence" value="ECO:0007669"/>
    <property type="project" value="UniProtKB-SubCell"/>
</dbReference>
<dbReference type="GO" id="GO:0042025">
    <property type="term" value="C:host cell nucleus"/>
    <property type="evidence" value="ECO:0007669"/>
    <property type="project" value="UniProtKB-SubCell"/>
</dbReference>
<dbReference type="GO" id="GO:0016020">
    <property type="term" value="C:membrane"/>
    <property type="evidence" value="ECO:0007669"/>
    <property type="project" value="UniProtKB-KW"/>
</dbReference>
<dbReference type="GO" id="GO:0019028">
    <property type="term" value="C:viral capsid"/>
    <property type="evidence" value="ECO:0007669"/>
    <property type="project" value="UniProtKB-KW"/>
</dbReference>
<dbReference type="GO" id="GO:0003677">
    <property type="term" value="F:DNA binding"/>
    <property type="evidence" value="ECO:0007669"/>
    <property type="project" value="UniProtKB-KW"/>
</dbReference>
<dbReference type="GO" id="GO:0005198">
    <property type="term" value="F:structural molecule activity"/>
    <property type="evidence" value="ECO:0007669"/>
    <property type="project" value="InterPro"/>
</dbReference>
<dbReference type="GO" id="GO:0046718">
    <property type="term" value="P:symbiont entry into host cell"/>
    <property type="evidence" value="ECO:0007669"/>
    <property type="project" value="UniProtKB-KW"/>
</dbReference>
<dbReference type="GO" id="GO:0075732">
    <property type="term" value="P:viral penetration into host nucleus"/>
    <property type="evidence" value="ECO:0007669"/>
    <property type="project" value="UniProtKB-KW"/>
</dbReference>
<dbReference type="InterPro" id="IPR001070">
    <property type="entry name" value="Polyoma_coat_VP2"/>
</dbReference>
<dbReference type="Pfam" id="PF00761">
    <property type="entry name" value="Polyoma_coat2"/>
    <property type="match status" value="1"/>
</dbReference>
<dbReference type="PIRSF" id="PIRSF003377">
    <property type="entry name" value="Polyoma_coat2"/>
    <property type="match status" value="1"/>
</dbReference>
<comment type="function">
    <molecule>Isoform VP2</molecule>
    <text evidence="1">Structural protein that resides within the core of the capsid surrounded by 72 VP1 pentamers. Participates in host cell receptor binding together with VP1. Following virus endocytosis and trafficking to the endoplasmic reticulum, VP2 and VP3 form oligomers and integrate into the endoplasmic reticulum membrane. Heterooligomer VP2-VP3 may create a viroporin for transporting the viral genome across the endoplasmic reticulum membrane to the cytoplasm. Nuclear entry of the viral DNA involves the selective exposure and importin recognition of VP2 or VP3 nuclear localization signal (shared C-terminus). Plays a role in virion assembly within the nucleus in particular through a DNA-binding domain located in the C-terminal region. A N-terminal myristoylation suggests a scaffold function for virion assembly (By similarity).</text>
</comment>
<comment type="function">
    <molecule>Isoform VP3</molecule>
    <text evidence="1">Structural protein that resides within the core of the capsid surrounded by 72 VP1 pentamers. Following virus endocytosis and trafficking to the endoplasmic reticulum, VP2 and VP3 form oligomers and integrate into the endoplasmic reticulum membrane. Heterooligomer VP2-VP3 may create a viroporin for transporting the viral genome across the endoplasmic reticulum membrane to the cytoplasm. Nuclear entry of the viral DNA involves the selective exposure and importin recognition of VP2 or VP3 nuclear localization signal (shared C-terminus). Plays a role in virion assembly within the nucleus (By similarity).</text>
</comment>
<comment type="subunit">
    <molecule>Isoform VP2</molecule>
    <text evidence="4">Forms homooligomers, and heterooligomers with VP3 in the endoplasmic reticulum membrane. Interacts (via D1 domain) with VP1.</text>
</comment>
<comment type="subunit">
    <molecule>Isoform VP3</molecule>
    <text evidence="1">Forms homooligomers, and heterooligomers with VP2 in the endoplasmic reticulum membrane. Interacts (via D1 domain) with VP1 (By similarity).</text>
</comment>
<comment type="subcellular location">
    <molecule>Isoform VP2</molecule>
    <subcellularLocation>
        <location>Virion</location>
    </subcellularLocation>
    <subcellularLocation>
        <location>Host nucleus</location>
    </subcellularLocation>
    <subcellularLocation>
        <location>Host endoplasmic reticulum</location>
    </subcellularLocation>
    <subcellularLocation>
        <location evidence="1">Host endoplasmic reticulum membrane</location>
    </subcellularLocation>
</comment>
<comment type="subcellular location">
    <molecule>Isoform VP3</molecule>
    <subcellularLocation>
        <location>Virion</location>
    </subcellularLocation>
    <subcellularLocation>
        <location>Host nucleus</location>
    </subcellularLocation>
    <subcellularLocation>
        <location>Host endoplasmic reticulum</location>
    </subcellularLocation>
    <subcellularLocation>
        <location evidence="1">Host endoplasmic reticulum membrane</location>
    </subcellularLocation>
</comment>
<comment type="alternative products">
    <event type="alternative splicing"/>
    <event type="alternative initiation"/>
    <isoform>
        <id>P24849-1</id>
        <name>VP2</name>
        <name>Minor capsid protein VP2</name>
        <sequence type="displayed"/>
    </isoform>
    <isoform>
        <id>P24849-2</id>
        <name>VP3</name>
        <name>Minor capsid protein VP3</name>
        <sequence type="described" ref="VSP_018917"/>
    </isoform>
    <isoform>
        <id>P24848-1</id>
        <name>VP1</name>
        <sequence type="external"/>
    </isoform>
    <isoform>
        <id>P24850-1</id>
        <name>Agno</name>
        <sequence type="external"/>
    </isoform>
</comment>
<comment type="miscellaneous">
    <molecule>Isoform VP2</molecule>
    <text>Produced by alternative splicing of the late mRNA.</text>
</comment>
<comment type="miscellaneous">
    <molecule>Isoform VP3</molecule>
    <text evidence="4">Produced by alternative initiation at Met-122 of isoform VP2.</text>
</comment>
<comment type="similarity">
    <text evidence="4">Belongs to the polyomaviruses capsid protein VP2 family.</text>
</comment>
<proteinExistence type="inferred from homology"/>
<keyword id="KW-0024">Alternative initiation</keyword>
<keyword id="KW-0025">Alternative splicing</keyword>
<keyword id="KW-0167">Capsid protein</keyword>
<keyword id="KW-0238">DNA-binding</keyword>
<keyword id="KW-1038">Host endoplasmic reticulum</keyword>
<keyword id="KW-1043">Host membrane</keyword>
<keyword id="KW-1048">Host nucleus</keyword>
<keyword id="KW-0426">Late protein</keyword>
<keyword id="KW-0449">Lipoprotein</keyword>
<keyword id="KW-0472">Membrane</keyword>
<keyword id="KW-0519">Myristate</keyword>
<keyword id="KW-1185">Reference proteome</keyword>
<keyword id="KW-0812">Transmembrane</keyword>
<keyword id="KW-1133">Transmembrane helix</keyword>
<keyword id="KW-1163">Viral penetration into host nucleus</keyword>
<keyword id="KW-0946">Virion</keyword>
<keyword id="KW-1160">Virus entry into host cell</keyword>
<sequence length="353" mass="39146">MGALLTILAEVFELATATGLSAEAILTGEAFTTAELLQAHIANLVEVGELSVAEALAATEVTSEAFEALQSISSVLPTAFIGVAATEGAILGSLITLTATSSALYPSTWKHSTPSANLNQEMALVPYIGDLDIFFPGAETISRFVYSIDPFRWASYLYNIVGRAVWEHLFRETRRQIAYHTTDIAGRTAQSIHHTIANFLENVRWTVSHLGTNLYSGLHNYYRQLPPLNPPQSRELARRLGVPQPDRQIFEKGEEGMKHPVSAEYVEKYGAPGGAEQRVAPDWLLPLLLGLYGDLTPAWEAEVEEEENEQDEEEYEPPQKRIKRTAKSSSKVNNKRGDRSARSPYRTRQHNHN</sequence>
<evidence type="ECO:0000250" key="1"/>
<evidence type="ECO:0000255" key="2"/>
<evidence type="ECO:0000256" key="3">
    <source>
        <dbReference type="SAM" id="MobiDB-lite"/>
    </source>
</evidence>
<evidence type="ECO:0000305" key="4"/>